<sequence length="117" mass="13544">MNTQQLFREITQEQIKSDVPAFRPGDTVRVHVKVVEGTRERIQLFEGVVIKRHGGGISETFTVRKISYGVGVERAFPLHSPRVAQIEVVRYGKVRRAKLYYLRNLRGKAARIKEIRR</sequence>
<evidence type="ECO:0000255" key="1">
    <source>
        <dbReference type="HAMAP-Rule" id="MF_00402"/>
    </source>
</evidence>
<evidence type="ECO:0000305" key="2"/>
<comment type="function">
    <text evidence="1">This protein is located at the 30S-50S ribosomal subunit interface and may play a role in the structure and function of the aminoacyl-tRNA binding site.</text>
</comment>
<comment type="similarity">
    <text evidence="1">Belongs to the bacterial ribosomal protein bL19 family.</text>
</comment>
<accession>B1YIM3</accession>
<gene>
    <name evidence="1" type="primary">rplS</name>
    <name type="ordered locus">Exig_1897</name>
</gene>
<name>RL19_EXIS2</name>
<keyword id="KW-1185">Reference proteome</keyword>
<keyword id="KW-0687">Ribonucleoprotein</keyword>
<keyword id="KW-0689">Ribosomal protein</keyword>
<feature type="chain" id="PRO_1000193841" description="Large ribosomal subunit protein bL19">
    <location>
        <begin position="1"/>
        <end position="117"/>
    </location>
</feature>
<reference key="1">
    <citation type="submission" date="2008-04" db="EMBL/GenBank/DDBJ databases">
        <title>Complete sequence of chromosome of Exiguobacterium sibiricum 255-15.</title>
        <authorList>
            <consortium name="US DOE Joint Genome Institute"/>
            <person name="Copeland A."/>
            <person name="Lucas S."/>
            <person name="Lapidus A."/>
            <person name="Glavina del Rio T."/>
            <person name="Dalin E."/>
            <person name="Tice H."/>
            <person name="Bruce D."/>
            <person name="Goodwin L."/>
            <person name="Pitluck S."/>
            <person name="Kiss H."/>
            <person name="Chertkov O."/>
            <person name="Monk C."/>
            <person name="Brettin T."/>
            <person name="Detter J.C."/>
            <person name="Han C."/>
            <person name="Kuske C.R."/>
            <person name="Schmutz J."/>
            <person name="Larimer F."/>
            <person name="Land M."/>
            <person name="Hauser L."/>
            <person name="Kyrpides N."/>
            <person name="Mikhailova N."/>
            <person name="Vishnivetskaya T."/>
            <person name="Rodrigues D.F."/>
            <person name="Gilichinsky D."/>
            <person name="Tiedje J."/>
            <person name="Richardson P."/>
        </authorList>
    </citation>
    <scope>NUCLEOTIDE SEQUENCE [LARGE SCALE GENOMIC DNA]</scope>
    <source>
        <strain>DSM 17290 / CCUG 55495 / CIP 109462 / JCM 13490 / 255-15</strain>
    </source>
</reference>
<organism>
    <name type="scientific">Exiguobacterium sibiricum (strain DSM 17290 / CCUG 55495 / CIP 109462 / JCM 13490 / 255-15)</name>
    <dbReference type="NCBI Taxonomy" id="262543"/>
    <lineage>
        <taxon>Bacteria</taxon>
        <taxon>Bacillati</taxon>
        <taxon>Bacillota</taxon>
        <taxon>Bacilli</taxon>
        <taxon>Bacillales</taxon>
        <taxon>Bacillales Family XII. Incertae Sedis</taxon>
        <taxon>Exiguobacterium</taxon>
    </lineage>
</organism>
<protein>
    <recommendedName>
        <fullName evidence="1">Large ribosomal subunit protein bL19</fullName>
    </recommendedName>
    <alternativeName>
        <fullName evidence="2">50S ribosomal protein L19</fullName>
    </alternativeName>
</protein>
<dbReference type="EMBL" id="CP001022">
    <property type="protein sequence ID" value="ACB61349.1"/>
    <property type="molecule type" value="Genomic_DNA"/>
</dbReference>
<dbReference type="RefSeq" id="WP_012370767.1">
    <property type="nucleotide sequence ID" value="NC_010556.1"/>
</dbReference>
<dbReference type="SMR" id="B1YIM3"/>
<dbReference type="STRING" id="262543.Exig_1897"/>
<dbReference type="KEGG" id="esi:Exig_1897"/>
<dbReference type="eggNOG" id="COG0335">
    <property type="taxonomic scope" value="Bacteria"/>
</dbReference>
<dbReference type="HOGENOM" id="CLU_103507_2_1_9"/>
<dbReference type="OrthoDB" id="9803541at2"/>
<dbReference type="Proteomes" id="UP000001681">
    <property type="component" value="Chromosome"/>
</dbReference>
<dbReference type="GO" id="GO:0022625">
    <property type="term" value="C:cytosolic large ribosomal subunit"/>
    <property type="evidence" value="ECO:0007669"/>
    <property type="project" value="TreeGrafter"/>
</dbReference>
<dbReference type="GO" id="GO:0003735">
    <property type="term" value="F:structural constituent of ribosome"/>
    <property type="evidence" value="ECO:0007669"/>
    <property type="project" value="InterPro"/>
</dbReference>
<dbReference type="GO" id="GO:0006412">
    <property type="term" value="P:translation"/>
    <property type="evidence" value="ECO:0007669"/>
    <property type="project" value="UniProtKB-UniRule"/>
</dbReference>
<dbReference type="FunFam" id="2.30.30.790:FF:000001">
    <property type="entry name" value="50S ribosomal protein L19"/>
    <property type="match status" value="1"/>
</dbReference>
<dbReference type="Gene3D" id="2.30.30.790">
    <property type="match status" value="1"/>
</dbReference>
<dbReference type="HAMAP" id="MF_00402">
    <property type="entry name" value="Ribosomal_bL19"/>
    <property type="match status" value="1"/>
</dbReference>
<dbReference type="InterPro" id="IPR001857">
    <property type="entry name" value="Ribosomal_bL19"/>
</dbReference>
<dbReference type="InterPro" id="IPR018257">
    <property type="entry name" value="Ribosomal_bL19_CS"/>
</dbReference>
<dbReference type="InterPro" id="IPR038657">
    <property type="entry name" value="Ribosomal_bL19_sf"/>
</dbReference>
<dbReference type="InterPro" id="IPR008991">
    <property type="entry name" value="Translation_prot_SH3-like_sf"/>
</dbReference>
<dbReference type="NCBIfam" id="TIGR01024">
    <property type="entry name" value="rplS_bact"/>
    <property type="match status" value="1"/>
</dbReference>
<dbReference type="PANTHER" id="PTHR15680:SF9">
    <property type="entry name" value="LARGE RIBOSOMAL SUBUNIT PROTEIN BL19M"/>
    <property type="match status" value="1"/>
</dbReference>
<dbReference type="PANTHER" id="PTHR15680">
    <property type="entry name" value="RIBOSOMAL PROTEIN L19"/>
    <property type="match status" value="1"/>
</dbReference>
<dbReference type="Pfam" id="PF01245">
    <property type="entry name" value="Ribosomal_L19"/>
    <property type="match status" value="1"/>
</dbReference>
<dbReference type="PIRSF" id="PIRSF002191">
    <property type="entry name" value="Ribosomal_L19"/>
    <property type="match status" value="1"/>
</dbReference>
<dbReference type="PRINTS" id="PR00061">
    <property type="entry name" value="RIBOSOMALL19"/>
</dbReference>
<dbReference type="SUPFAM" id="SSF50104">
    <property type="entry name" value="Translation proteins SH3-like domain"/>
    <property type="match status" value="1"/>
</dbReference>
<dbReference type="PROSITE" id="PS01015">
    <property type="entry name" value="RIBOSOMAL_L19"/>
    <property type="match status" value="1"/>
</dbReference>
<proteinExistence type="inferred from homology"/>